<keyword id="KW-0025">Alternative splicing</keyword>
<keyword id="KW-1267">Proteomics identification</keyword>
<keyword id="KW-1185">Reference proteome</keyword>
<keyword id="KW-0833">Ubl conjugation pathway</keyword>
<accession>O75426</accession>
<accession>A4D2D4</accession>
<accession>B4DX91</accession>
<accession>B4DY42</accession>
<accession>Q9H0G1</accession>
<evidence type="ECO:0000250" key="1"/>
<evidence type="ECO:0000255" key="2">
    <source>
        <dbReference type="PROSITE-ProRule" id="PRU00080"/>
    </source>
</evidence>
<evidence type="ECO:0000303" key="3">
    <source>
    </source>
</evidence>
<evidence type="ECO:0000303" key="4">
    <source>
    </source>
</evidence>
<gene>
    <name type="primary">FBXO24</name>
    <name type="synonym">FBX24</name>
</gene>
<dbReference type="EMBL" id="AF174604">
    <property type="protein sequence ID" value="AAF04525.1"/>
    <property type="molecule type" value="mRNA"/>
</dbReference>
<dbReference type="EMBL" id="AF053356">
    <property type="protein sequence ID" value="AAC78801.1"/>
    <property type="molecule type" value="Genomic_DNA"/>
</dbReference>
<dbReference type="EMBL" id="AL136811">
    <property type="protein sequence ID" value="CAB66745.1"/>
    <property type="molecule type" value="mRNA"/>
</dbReference>
<dbReference type="EMBL" id="AK301864">
    <property type="protein sequence ID" value="BAG63303.1"/>
    <property type="molecule type" value="mRNA"/>
</dbReference>
<dbReference type="EMBL" id="AK302252">
    <property type="protein sequence ID" value="BAG63604.1"/>
    <property type="molecule type" value="mRNA"/>
</dbReference>
<dbReference type="EMBL" id="AC069281">
    <property type="protein sequence ID" value="AAP21862.1"/>
    <property type="molecule type" value="Genomic_DNA"/>
</dbReference>
<dbReference type="EMBL" id="AC069281">
    <property type="protein sequence ID" value="AAP21863.1"/>
    <property type="molecule type" value="Genomic_DNA"/>
</dbReference>
<dbReference type="EMBL" id="CH236956">
    <property type="protein sequence ID" value="EAL23827.1"/>
    <property type="molecule type" value="Genomic_DNA"/>
</dbReference>
<dbReference type="EMBL" id="CH471091">
    <property type="protein sequence ID" value="EAW76517.1"/>
    <property type="molecule type" value="Genomic_DNA"/>
</dbReference>
<dbReference type="EMBL" id="BC067293">
    <property type="protein sequence ID" value="AAH67293.1"/>
    <property type="molecule type" value="mRNA"/>
</dbReference>
<dbReference type="CCDS" id="CCDS55138.1">
    <molecule id="O75426-4"/>
</dbReference>
<dbReference type="CCDS" id="CCDS5698.1">
    <molecule id="O75426-1"/>
</dbReference>
<dbReference type="CCDS" id="CCDS5699.2">
    <molecule id="O75426-3"/>
</dbReference>
<dbReference type="RefSeq" id="NP_001156971.1">
    <molecule id="O75426-4"/>
    <property type="nucleotide sequence ID" value="NM_001163499.2"/>
</dbReference>
<dbReference type="RefSeq" id="NP_036304.2">
    <molecule id="O75426-3"/>
    <property type="nucleotide sequence ID" value="NM_012172.5"/>
</dbReference>
<dbReference type="RefSeq" id="NP_277041.1">
    <molecule id="O75426-1"/>
    <property type="nucleotide sequence ID" value="NM_033506.3"/>
</dbReference>
<dbReference type="SMR" id="O75426"/>
<dbReference type="BioGRID" id="117647">
    <property type="interactions" value="13"/>
</dbReference>
<dbReference type="ComplexPortal" id="CPX-7963">
    <property type="entry name" value="SCF E3 ubiquitin ligase complex, FBXO24 variant"/>
</dbReference>
<dbReference type="FunCoup" id="O75426">
    <property type="interactions" value="29"/>
</dbReference>
<dbReference type="IntAct" id="O75426">
    <property type="interactions" value="19"/>
</dbReference>
<dbReference type="STRING" id="9606.ENSP00000416558"/>
<dbReference type="iPTMnet" id="O75426"/>
<dbReference type="PhosphoSitePlus" id="O75426"/>
<dbReference type="BioMuta" id="FBXO24"/>
<dbReference type="MassIVE" id="O75426"/>
<dbReference type="PaxDb" id="9606-ENSP00000416558"/>
<dbReference type="PeptideAtlas" id="O75426"/>
<dbReference type="ProteomicsDB" id="49996">
    <molecule id="O75426-1"/>
</dbReference>
<dbReference type="ProteomicsDB" id="49997">
    <molecule id="O75426-2"/>
</dbReference>
<dbReference type="ProteomicsDB" id="49998">
    <molecule id="O75426-3"/>
</dbReference>
<dbReference type="ProteomicsDB" id="49999">
    <molecule id="O75426-4"/>
</dbReference>
<dbReference type="Antibodypedia" id="30754">
    <property type="antibodies" value="220 antibodies from 22 providers"/>
</dbReference>
<dbReference type="DNASU" id="26261"/>
<dbReference type="Ensembl" id="ENST00000241071.11">
    <molecule id="O75426-1"/>
    <property type="protein sequence ID" value="ENSP00000241071.6"/>
    <property type="gene ID" value="ENSG00000106336.13"/>
</dbReference>
<dbReference type="Ensembl" id="ENST00000427939.2">
    <molecule id="O75426-3"/>
    <property type="protein sequence ID" value="ENSP00000416558.2"/>
    <property type="gene ID" value="ENSG00000106336.13"/>
</dbReference>
<dbReference type="Ensembl" id="ENST00000465843.5">
    <molecule id="O75426-2"/>
    <property type="protein sequence ID" value="ENSP00000419602.1"/>
    <property type="gene ID" value="ENSG00000106336.13"/>
</dbReference>
<dbReference type="Ensembl" id="ENST00000468962.5">
    <molecule id="O75426-4"/>
    <property type="protein sequence ID" value="ENSP00000420239.1"/>
    <property type="gene ID" value="ENSG00000106336.13"/>
</dbReference>
<dbReference type="GeneID" id="26261"/>
<dbReference type="KEGG" id="hsa:26261"/>
<dbReference type="MANE-Select" id="ENST00000241071.11">
    <property type="protein sequence ID" value="ENSP00000241071.6"/>
    <property type="RefSeq nucleotide sequence ID" value="NM_033506.3"/>
    <property type="RefSeq protein sequence ID" value="NP_277041.1"/>
</dbReference>
<dbReference type="UCSC" id="uc003uvl.2">
    <molecule id="O75426-1"/>
    <property type="organism name" value="human"/>
</dbReference>
<dbReference type="AGR" id="HGNC:13595"/>
<dbReference type="CTD" id="26261"/>
<dbReference type="DisGeNET" id="26261"/>
<dbReference type="GeneCards" id="FBXO24"/>
<dbReference type="HGNC" id="HGNC:13595">
    <property type="gene designation" value="FBXO24"/>
</dbReference>
<dbReference type="HPA" id="ENSG00000106336">
    <property type="expression patterns" value="Tissue enriched (testis)"/>
</dbReference>
<dbReference type="MIM" id="609097">
    <property type="type" value="gene"/>
</dbReference>
<dbReference type="neXtProt" id="NX_O75426"/>
<dbReference type="OpenTargets" id="ENSG00000106336"/>
<dbReference type="PharmGKB" id="PA28037"/>
<dbReference type="VEuPathDB" id="HostDB:ENSG00000106336"/>
<dbReference type="eggNOG" id="KOG0274">
    <property type="taxonomic scope" value="Eukaryota"/>
</dbReference>
<dbReference type="GeneTree" id="ENSGT00390000017455"/>
<dbReference type="HOGENOM" id="CLU_032821_0_0_1"/>
<dbReference type="InParanoid" id="O75426"/>
<dbReference type="OMA" id="DFFWQAL"/>
<dbReference type="OrthoDB" id="101791at2759"/>
<dbReference type="PAN-GO" id="O75426">
    <property type="GO annotations" value="0 GO annotations based on evolutionary models"/>
</dbReference>
<dbReference type="PhylomeDB" id="O75426"/>
<dbReference type="TreeFam" id="TF328722"/>
<dbReference type="PathwayCommons" id="O75426"/>
<dbReference type="SignaLink" id="O75426"/>
<dbReference type="BioGRID-ORCS" id="26261">
    <property type="hits" value="15 hits in 1188 CRISPR screens"/>
</dbReference>
<dbReference type="ChiTaRS" id="FBXO24">
    <property type="organism name" value="human"/>
</dbReference>
<dbReference type="GenomeRNAi" id="26261"/>
<dbReference type="Pharos" id="O75426">
    <property type="development level" value="Tdark"/>
</dbReference>
<dbReference type="PRO" id="PR:O75426"/>
<dbReference type="Proteomes" id="UP000005640">
    <property type="component" value="Chromosome 7"/>
</dbReference>
<dbReference type="RNAct" id="O75426">
    <property type="molecule type" value="protein"/>
</dbReference>
<dbReference type="Bgee" id="ENSG00000106336">
    <property type="expression patterns" value="Expressed in left testis and 121 other cell types or tissues"/>
</dbReference>
<dbReference type="ExpressionAtlas" id="O75426">
    <property type="expression patterns" value="baseline and differential"/>
</dbReference>
<dbReference type="GO" id="GO:0019005">
    <property type="term" value="C:SCF ubiquitin ligase complex"/>
    <property type="evidence" value="ECO:0007669"/>
    <property type="project" value="Ensembl"/>
</dbReference>
<dbReference type="GO" id="GO:0000151">
    <property type="term" value="C:ubiquitin ligase complex"/>
    <property type="evidence" value="ECO:0000303"/>
    <property type="project" value="UniProtKB"/>
</dbReference>
<dbReference type="GO" id="GO:0004842">
    <property type="term" value="F:ubiquitin-protein transferase activity"/>
    <property type="evidence" value="ECO:0000303"/>
    <property type="project" value="UniProtKB"/>
</dbReference>
<dbReference type="GO" id="GO:0035082">
    <property type="term" value="P:axoneme assembly"/>
    <property type="evidence" value="ECO:0007669"/>
    <property type="project" value="Ensembl"/>
</dbReference>
<dbReference type="GO" id="GO:0006325">
    <property type="term" value="P:chromatin organization"/>
    <property type="evidence" value="ECO:0007669"/>
    <property type="project" value="Ensembl"/>
</dbReference>
<dbReference type="GO" id="GO:0007005">
    <property type="term" value="P:mitochondrion organization"/>
    <property type="evidence" value="ECO:0007669"/>
    <property type="project" value="Ensembl"/>
</dbReference>
<dbReference type="GO" id="GO:0000398">
    <property type="term" value="P:mRNA splicing, via spliceosome"/>
    <property type="evidence" value="ECO:0007669"/>
    <property type="project" value="Ensembl"/>
</dbReference>
<dbReference type="GO" id="GO:0034587">
    <property type="term" value="P:piRNA processing"/>
    <property type="evidence" value="ECO:0007669"/>
    <property type="project" value="Ensembl"/>
</dbReference>
<dbReference type="GO" id="GO:0030163">
    <property type="term" value="P:protein catabolic process"/>
    <property type="evidence" value="ECO:0007669"/>
    <property type="project" value="Ensembl"/>
</dbReference>
<dbReference type="GO" id="GO:0016567">
    <property type="term" value="P:protein ubiquitination"/>
    <property type="evidence" value="ECO:0000303"/>
    <property type="project" value="UniProtKB"/>
</dbReference>
<dbReference type="GO" id="GO:0007338">
    <property type="term" value="P:single fertilization"/>
    <property type="evidence" value="ECO:0007669"/>
    <property type="project" value="Ensembl"/>
</dbReference>
<dbReference type="GO" id="GO:0007283">
    <property type="term" value="P:spermatogenesis"/>
    <property type="evidence" value="ECO:0007669"/>
    <property type="project" value="Ensembl"/>
</dbReference>
<dbReference type="CDD" id="cd22098">
    <property type="entry name" value="F-box_FBXO24"/>
    <property type="match status" value="1"/>
</dbReference>
<dbReference type="Gene3D" id="1.20.1280.50">
    <property type="match status" value="1"/>
</dbReference>
<dbReference type="Gene3D" id="2.130.10.30">
    <property type="entry name" value="Regulator of chromosome condensation 1/beta-lactamase-inhibitor protein II"/>
    <property type="match status" value="1"/>
</dbReference>
<dbReference type="InterPro" id="IPR036047">
    <property type="entry name" value="F-box-like_dom_sf"/>
</dbReference>
<dbReference type="InterPro" id="IPR001810">
    <property type="entry name" value="F-box_dom"/>
</dbReference>
<dbReference type="InterPro" id="IPR052866">
    <property type="entry name" value="F-box_protein_24"/>
</dbReference>
<dbReference type="InterPro" id="IPR009091">
    <property type="entry name" value="RCC1/BLIP-II"/>
</dbReference>
<dbReference type="InterPro" id="IPR000408">
    <property type="entry name" value="Reg_chr_condens"/>
</dbReference>
<dbReference type="PANTHER" id="PTHR47004">
    <property type="entry name" value="F-BOX ONLY PROTEIN 24"/>
    <property type="match status" value="1"/>
</dbReference>
<dbReference type="PANTHER" id="PTHR47004:SF1">
    <property type="entry name" value="F-BOX ONLY PROTEIN 24"/>
    <property type="match status" value="1"/>
</dbReference>
<dbReference type="Pfam" id="PF12937">
    <property type="entry name" value="F-box-like"/>
    <property type="match status" value="1"/>
</dbReference>
<dbReference type="Pfam" id="PF00415">
    <property type="entry name" value="RCC1"/>
    <property type="match status" value="1"/>
</dbReference>
<dbReference type="SMART" id="SM00256">
    <property type="entry name" value="FBOX"/>
    <property type="match status" value="1"/>
</dbReference>
<dbReference type="SUPFAM" id="SSF81383">
    <property type="entry name" value="F-box domain"/>
    <property type="match status" value="1"/>
</dbReference>
<dbReference type="SUPFAM" id="SSF50985">
    <property type="entry name" value="RCC1/BLIP-II"/>
    <property type="match status" value="1"/>
</dbReference>
<dbReference type="PROSITE" id="PS50181">
    <property type="entry name" value="FBOX"/>
    <property type="match status" value="1"/>
</dbReference>
<dbReference type="PROSITE" id="PS50012">
    <property type="entry name" value="RCC1_3"/>
    <property type="match status" value="1"/>
</dbReference>
<name>FBX24_HUMAN</name>
<proteinExistence type="evidence at protein level"/>
<sequence>MGEKAVPLLRRRRVKRSCPSCGSELGVEEKRGKGNPISIQLFPPELVEHIISFLPVRDLVALGQTCRYFHEVCDGEGVWRRICRRLSPRLQDQGSGVRPWKRAAILNYTKGLYFQAFGGRRRCLSKSVAPLLAHGYRRFLPTKDHVFILDYVGTLFFLKNALVSTLGQMQWKRACRYVVLCRGAKDFASDPRCDTVYRKYLYVLATREPQEVVGTTSSRACDCVEVYLQSSGQRVFKMTFHHSMTFKQIVLVGQETQRALLLLTEEGKIYSLVVNETQLDQPRSYTVQLALRKVSHYLPHLRVACMTSNQSSTLYVTDQGGVYFEVHTPGVYRDLFGTLQAFDPLDQQMPLALSLPAKILFCALGYNHLGLVDEFGRIFMQGNNRYGQLGTGDKMDRGEPTQVCYLQRPITLWCGLNHSLVLSQSSEFSKELLGCGCGAGGRLPGWPKGSASFVKLQVKVPLCACALCATRECLYILSSHDIEQHAPYRHLPASRVVGTPEPSLGARAPQDPGGMAQACEEYLSQIHSCQTLQDRTEKMKEIVGWMPLMAAQKDFFWEALDMLQRAEGGGGGVGPPAPET</sequence>
<comment type="function">
    <text evidence="1">Substrate-recognition component of the SCF (SKP1-CUL1-F-box protein)-type E3 ubiquitin ligase complex.</text>
</comment>
<comment type="subunit">
    <text evidence="1">Directly interacts with SKP1 and CUL1.</text>
</comment>
<comment type="interaction">
    <interactant intactId="EBI-6425658">
        <id>O75426</id>
    </interactant>
    <interactant intactId="EBI-352572">
        <id>P08238</id>
        <label>HSP90AB1</label>
    </interactant>
    <organismsDiffer>false</organismsDiffer>
    <experiments>2</experiments>
</comment>
<comment type="interaction">
    <interactant intactId="EBI-6425658">
        <id>O75426</id>
    </interactant>
    <interactant intactId="EBI-1052153">
        <id>Q8WVJ2</id>
        <label>NUDCD2</label>
    </interactant>
    <organismsDiffer>false</organismsDiffer>
    <experiments>3</experiments>
</comment>
<comment type="interaction">
    <interactant intactId="EBI-6425658">
        <id>O75426</id>
    </interactant>
    <interactant intactId="EBI-912440">
        <id>Q96LA8</id>
        <label>PRMT6</label>
    </interactant>
    <organismsDiffer>false</organismsDiffer>
    <experiments>3</experiments>
</comment>
<comment type="alternative products">
    <event type="alternative splicing"/>
    <isoform>
        <id>O75426-1</id>
        <name>1</name>
        <sequence type="displayed"/>
    </isoform>
    <isoform>
        <id>O75426-2</id>
        <name>2</name>
        <sequence type="described" ref="VSP_011351 VSP_011352 VSP_011353"/>
    </isoform>
    <isoform>
        <id>O75426-3</id>
        <name>3</name>
        <sequence type="described" ref="VSP_043459"/>
    </isoform>
    <isoform>
        <id>O75426-4</id>
        <name>4</name>
        <sequence type="described" ref="VSP_043458"/>
    </isoform>
</comment>
<reference key="1">
    <citation type="journal article" date="1999" name="Curr. Biol.">
        <title>Identification of a family of human F-box proteins.</title>
        <authorList>
            <person name="Cenciarelli C."/>
            <person name="Chiaur D.S."/>
            <person name="Guardavaccaro D."/>
            <person name="Parks W."/>
            <person name="Vidal M."/>
            <person name="Pagano M."/>
        </authorList>
    </citation>
    <scope>NUCLEOTIDE SEQUENCE [MRNA] (ISOFORM 2)</scope>
</reference>
<reference key="2">
    <citation type="submission" date="1998-05" db="EMBL/GenBank/DDBJ databases">
        <title>Large scale analysis of two regions in human chromosome 7q22: annotation of 650 kb of genomic sequence around the PCOLCE and CUTL1 loci reveals 17 genes.</title>
        <authorList>
            <person name="Gloeckner G."/>
            <person name="Rosenthal A."/>
            <person name="Scherer S."/>
            <person name="Weber J."/>
            <person name="Schattevoy R."/>
            <person name="Tsui L.-C."/>
        </authorList>
    </citation>
    <scope>NUCLEOTIDE SEQUENCE [GENOMIC DNA]</scope>
</reference>
<reference key="3">
    <citation type="journal article" date="2001" name="Genome Res.">
        <title>Towards a catalog of human genes and proteins: sequencing and analysis of 500 novel complete protein coding human cDNAs.</title>
        <authorList>
            <person name="Wiemann S."/>
            <person name="Weil B."/>
            <person name="Wellenreuther R."/>
            <person name="Gassenhuber J."/>
            <person name="Glassl S."/>
            <person name="Ansorge W."/>
            <person name="Boecher M."/>
            <person name="Bloecker H."/>
            <person name="Bauersachs S."/>
            <person name="Blum H."/>
            <person name="Lauber J."/>
            <person name="Duesterhoeft A."/>
            <person name="Beyer A."/>
            <person name="Koehrer K."/>
            <person name="Strack N."/>
            <person name="Mewes H.-W."/>
            <person name="Ottenwaelder B."/>
            <person name="Obermaier B."/>
            <person name="Tampe J."/>
            <person name="Heubner D."/>
            <person name="Wambutt R."/>
            <person name="Korn B."/>
            <person name="Klein M."/>
            <person name="Poustka A."/>
        </authorList>
    </citation>
    <scope>NUCLEOTIDE SEQUENCE [LARGE SCALE MRNA] (ISOFORM 1)</scope>
    <source>
        <tissue>Testis</tissue>
    </source>
</reference>
<reference key="4">
    <citation type="journal article" date="2004" name="Nat. Genet.">
        <title>Complete sequencing and characterization of 21,243 full-length human cDNAs.</title>
        <authorList>
            <person name="Ota T."/>
            <person name="Suzuki Y."/>
            <person name="Nishikawa T."/>
            <person name="Otsuki T."/>
            <person name="Sugiyama T."/>
            <person name="Irie R."/>
            <person name="Wakamatsu A."/>
            <person name="Hayashi K."/>
            <person name="Sato H."/>
            <person name="Nagai K."/>
            <person name="Kimura K."/>
            <person name="Makita H."/>
            <person name="Sekine M."/>
            <person name="Obayashi M."/>
            <person name="Nishi T."/>
            <person name="Shibahara T."/>
            <person name="Tanaka T."/>
            <person name="Ishii S."/>
            <person name="Yamamoto J."/>
            <person name="Saito K."/>
            <person name="Kawai Y."/>
            <person name="Isono Y."/>
            <person name="Nakamura Y."/>
            <person name="Nagahari K."/>
            <person name="Murakami K."/>
            <person name="Yasuda T."/>
            <person name="Iwayanagi T."/>
            <person name="Wagatsuma M."/>
            <person name="Shiratori A."/>
            <person name="Sudo H."/>
            <person name="Hosoiri T."/>
            <person name="Kaku Y."/>
            <person name="Kodaira H."/>
            <person name="Kondo H."/>
            <person name="Sugawara M."/>
            <person name="Takahashi M."/>
            <person name="Kanda K."/>
            <person name="Yokoi T."/>
            <person name="Furuya T."/>
            <person name="Kikkawa E."/>
            <person name="Omura Y."/>
            <person name="Abe K."/>
            <person name="Kamihara K."/>
            <person name="Katsuta N."/>
            <person name="Sato K."/>
            <person name="Tanikawa M."/>
            <person name="Yamazaki M."/>
            <person name="Ninomiya K."/>
            <person name="Ishibashi T."/>
            <person name="Yamashita H."/>
            <person name="Murakawa K."/>
            <person name="Fujimori K."/>
            <person name="Tanai H."/>
            <person name="Kimata M."/>
            <person name="Watanabe M."/>
            <person name="Hiraoka S."/>
            <person name="Chiba Y."/>
            <person name="Ishida S."/>
            <person name="Ono Y."/>
            <person name="Takiguchi S."/>
            <person name="Watanabe S."/>
            <person name="Yosida M."/>
            <person name="Hotuta T."/>
            <person name="Kusano J."/>
            <person name="Kanehori K."/>
            <person name="Takahashi-Fujii A."/>
            <person name="Hara H."/>
            <person name="Tanase T.-O."/>
            <person name="Nomura Y."/>
            <person name="Togiya S."/>
            <person name="Komai F."/>
            <person name="Hara R."/>
            <person name="Takeuchi K."/>
            <person name="Arita M."/>
            <person name="Imose N."/>
            <person name="Musashino K."/>
            <person name="Yuuki H."/>
            <person name="Oshima A."/>
            <person name="Sasaki N."/>
            <person name="Aotsuka S."/>
            <person name="Yoshikawa Y."/>
            <person name="Matsunawa H."/>
            <person name="Ichihara T."/>
            <person name="Shiohata N."/>
            <person name="Sano S."/>
            <person name="Moriya S."/>
            <person name="Momiyama H."/>
            <person name="Satoh N."/>
            <person name="Takami S."/>
            <person name="Terashima Y."/>
            <person name="Suzuki O."/>
            <person name="Nakagawa S."/>
            <person name="Senoh A."/>
            <person name="Mizoguchi H."/>
            <person name="Goto Y."/>
            <person name="Shimizu F."/>
            <person name="Wakebe H."/>
            <person name="Hishigaki H."/>
            <person name="Watanabe T."/>
            <person name="Sugiyama A."/>
            <person name="Takemoto M."/>
            <person name="Kawakami B."/>
            <person name="Yamazaki M."/>
            <person name="Watanabe K."/>
            <person name="Kumagai A."/>
            <person name="Itakura S."/>
            <person name="Fukuzumi Y."/>
            <person name="Fujimori Y."/>
            <person name="Komiyama M."/>
            <person name="Tashiro H."/>
            <person name="Tanigami A."/>
            <person name="Fujiwara T."/>
            <person name="Ono T."/>
            <person name="Yamada K."/>
            <person name="Fujii Y."/>
            <person name="Ozaki K."/>
            <person name="Hirao M."/>
            <person name="Ohmori Y."/>
            <person name="Kawabata A."/>
            <person name="Hikiji T."/>
            <person name="Kobatake N."/>
            <person name="Inagaki H."/>
            <person name="Ikema Y."/>
            <person name="Okamoto S."/>
            <person name="Okitani R."/>
            <person name="Kawakami T."/>
            <person name="Noguchi S."/>
            <person name="Itoh T."/>
            <person name="Shigeta K."/>
            <person name="Senba T."/>
            <person name="Matsumura K."/>
            <person name="Nakajima Y."/>
            <person name="Mizuno T."/>
            <person name="Morinaga M."/>
            <person name="Sasaki M."/>
            <person name="Togashi T."/>
            <person name="Oyama M."/>
            <person name="Hata H."/>
            <person name="Watanabe M."/>
            <person name="Komatsu T."/>
            <person name="Mizushima-Sugano J."/>
            <person name="Satoh T."/>
            <person name="Shirai Y."/>
            <person name="Takahashi Y."/>
            <person name="Nakagawa K."/>
            <person name="Okumura K."/>
            <person name="Nagase T."/>
            <person name="Nomura N."/>
            <person name="Kikuchi H."/>
            <person name="Masuho Y."/>
            <person name="Yamashita R."/>
            <person name="Nakai K."/>
            <person name="Yada T."/>
            <person name="Nakamura Y."/>
            <person name="Ohara O."/>
            <person name="Isogai T."/>
            <person name="Sugano S."/>
        </authorList>
    </citation>
    <scope>NUCLEOTIDE SEQUENCE [LARGE SCALE MRNA] (ISOFORMS 3 AND 4)</scope>
    <source>
        <tissue>Testis</tissue>
    </source>
</reference>
<reference key="5">
    <citation type="journal article" date="2003" name="Science">
        <title>Human chromosome 7: DNA sequence and biology.</title>
        <authorList>
            <person name="Scherer S.W."/>
            <person name="Cheung J."/>
            <person name="MacDonald J.R."/>
            <person name="Osborne L.R."/>
            <person name="Nakabayashi K."/>
            <person name="Herbrick J.-A."/>
            <person name="Carson A.R."/>
            <person name="Parker-Katiraee L."/>
            <person name="Skaug J."/>
            <person name="Khaja R."/>
            <person name="Zhang J."/>
            <person name="Hudek A.K."/>
            <person name="Li M."/>
            <person name="Haddad M."/>
            <person name="Duggan G.E."/>
            <person name="Fernandez B.A."/>
            <person name="Kanematsu E."/>
            <person name="Gentles S."/>
            <person name="Christopoulos C.C."/>
            <person name="Choufani S."/>
            <person name="Kwasnicka D."/>
            <person name="Zheng X.H."/>
            <person name="Lai Z."/>
            <person name="Nusskern D.R."/>
            <person name="Zhang Q."/>
            <person name="Gu Z."/>
            <person name="Lu F."/>
            <person name="Zeesman S."/>
            <person name="Nowaczyk M.J."/>
            <person name="Teshima I."/>
            <person name="Chitayat D."/>
            <person name="Shuman C."/>
            <person name="Weksberg R."/>
            <person name="Zackai E.H."/>
            <person name="Grebe T.A."/>
            <person name="Cox S.R."/>
            <person name="Kirkpatrick S.J."/>
            <person name="Rahman N."/>
            <person name="Friedman J.M."/>
            <person name="Heng H.H.Q."/>
            <person name="Pelicci P.G."/>
            <person name="Lo-Coco F."/>
            <person name="Belloni E."/>
            <person name="Shaffer L.G."/>
            <person name="Pober B."/>
            <person name="Morton C.C."/>
            <person name="Gusella J.F."/>
            <person name="Bruns G.A.P."/>
            <person name="Korf B.R."/>
            <person name="Quade B.J."/>
            <person name="Ligon A.H."/>
            <person name="Ferguson H."/>
            <person name="Higgins A.W."/>
            <person name="Leach N.T."/>
            <person name="Herrick S.R."/>
            <person name="Lemyre E."/>
            <person name="Farra C.G."/>
            <person name="Kim H.-G."/>
            <person name="Summers A.M."/>
            <person name="Gripp K.W."/>
            <person name="Roberts W."/>
            <person name="Szatmari P."/>
            <person name="Winsor E.J.T."/>
            <person name="Grzeschik K.-H."/>
            <person name="Teebi A."/>
            <person name="Minassian B.A."/>
            <person name="Kere J."/>
            <person name="Armengol L."/>
            <person name="Pujana M.A."/>
            <person name="Estivill X."/>
            <person name="Wilson M.D."/>
            <person name="Koop B.F."/>
            <person name="Tosi S."/>
            <person name="Moore G.E."/>
            <person name="Boright A.P."/>
            <person name="Zlotorynski E."/>
            <person name="Kerem B."/>
            <person name="Kroisel P.M."/>
            <person name="Petek E."/>
            <person name="Oscier D.G."/>
            <person name="Mould S.J."/>
            <person name="Doehner H."/>
            <person name="Doehner K."/>
            <person name="Rommens J.M."/>
            <person name="Vincent J.B."/>
            <person name="Venter J.C."/>
            <person name="Li P.W."/>
            <person name="Mural R.J."/>
            <person name="Adams M.D."/>
            <person name="Tsui L.-C."/>
        </authorList>
    </citation>
    <scope>NUCLEOTIDE SEQUENCE [LARGE SCALE GENOMIC DNA]</scope>
</reference>
<reference key="6">
    <citation type="submission" date="2005-09" db="EMBL/GenBank/DDBJ databases">
        <authorList>
            <person name="Mural R.J."/>
            <person name="Istrail S."/>
            <person name="Sutton G.G."/>
            <person name="Florea L."/>
            <person name="Halpern A.L."/>
            <person name="Mobarry C.M."/>
            <person name="Lippert R."/>
            <person name="Walenz B."/>
            <person name="Shatkay H."/>
            <person name="Dew I."/>
            <person name="Miller J.R."/>
            <person name="Flanigan M.J."/>
            <person name="Edwards N.J."/>
            <person name="Bolanos R."/>
            <person name="Fasulo D."/>
            <person name="Halldorsson B.V."/>
            <person name="Hannenhalli S."/>
            <person name="Turner R."/>
            <person name="Yooseph S."/>
            <person name="Lu F."/>
            <person name="Nusskern D.R."/>
            <person name="Shue B.C."/>
            <person name="Zheng X.H."/>
            <person name="Zhong F."/>
            <person name="Delcher A.L."/>
            <person name="Huson D.H."/>
            <person name="Kravitz S.A."/>
            <person name="Mouchard L."/>
            <person name="Reinert K."/>
            <person name="Remington K.A."/>
            <person name="Clark A.G."/>
            <person name="Waterman M.S."/>
            <person name="Eichler E.E."/>
            <person name="Adams M.D."/>
            <person name="Hunkapiller M.W."/>
            <person name="Myers E.W."/>
            <person name="Venter J.C."/>
        </authorList>
    </citation>
    <scope>NUCLEOTIDE SEQUENCE [LARGE SCALE GENOMIC DNA]</scope>
</reference>
<reference key="7">
    <citation type="journal article" date="2003" name="Nature">
        <title>The DNA sequence of human chromosome 7.</title>
        <authorList>
            <person name="Hillier L.W."/>
            <person name="Fulton R.S."/>
            <person name="Fulton L.A."/>
            <person name="Graves T.A."/>
            <person name="Pepin K.H."/>
            <person name="Wagner-McPherson C."/>
            <person name="Layman D."/>
            <person name="Maas J."/>
            <person name="Jaeger S."/>
            <person name="Walker R."/>
            <person name="Wylie K."/>
            <person name="Sekhon M."/>
            <person name="Becker M.C."/>
            <person name="O'Laughlin M.D."/>
            <person name="Schaller M.E."/>
            <person name="Fewell G.A."/>
            <person name="Delehaunty K.D."/>
            <person name="Miner T.L."/>
            <person name="Nash W.E."/>
            <person name="Cordes M."/>
            <person name="Du H."/>
            <person name="Sun H."/>
            <person name="Edwards J."/>
            <person name="Bradshaw-Cordum H."/>
            <person name="Ali J."/>
            <person name="Andrews S."/>
            <person name="Isak A."/>
            <person name="Vanbrunt A."/>
            <person name="Nguyen C."/>
            <person name="Du F."/>
            <person name="Lamar B."/>
            <person name="Courtney L."/>
            <person name="Kalicki J."/>
            <person name="Ozersky P."/>
            <person name="Bielicki L."/>
            <person name="Scott K."/>
            <person name="Holmes A."/>
            <person name="Harkins R."/>
            <person name="Harris A."/>
            <person name="Strong C.M."/>
            <person name="Hou S."/>
            <person name="Tomlinson C."/>
            <person name="Dauphin-Kohlberg S."/>
            <person name="Kozlowicz-Reilly A."/>
            <person name="Leonard S."/>
            <person name="Rohlfing T."/>
            <person name="Rock S.M."/>
            <person name="Tin-Wollam A.-M."/>
            <person name="Abbott A."/>
            <person name="Minx P."/>
            <person name="Maupin R."/>
            <person name="Strowmatt C."/>
            <person name="Latreille P."/>
            <person name="Miller N."/>
            <person name="Johnson D."/>
            <person name="Murray J."/>
            <person name="Woessner J.P."/>
            <person name="Wendl M.C."/>
            <person name="Yang S.-P."/>
            <person name="Schultz B.R."/>
            <person name="Wallis J.W."/>
            <person name="Spieth J."/>
            <person name="Bieri T.A."/>
            <person name="Nelson J.O."/>
            <person name="Berkowicz N."/>
            <person name="Wohldmann P.E."/>
            <person name="Cook L.L."/>
            <person name="Hickenbotham M.T."/>
            <person name="Eldred J."/>
            <person name="Williams D."/>
            <person name="Bedell J.A."/>
            <person name="Mardis E.R."/>
            <person name="Clifton S.W."/>
            <person name="Chissoe S.L."/>
            <person name="Marra M.A."/>
            <person name="Raymond C."/>
            <person name="Haugen E."/>
            <person name="Gillett W."/>
            <person name="Zhou Y."/>
            <person name="James R."/>
            <person name="Phelps K."/>
            <person name="Iadanoto S."/>
            <person name="Bubb K."/>
            <person name="Simms E."/>
            <person name="Levy R."/>
            <person name="Clendenning J."/>
            <person name="Kaul R."/>
            <person name="Kent W.J."/>
            <person name="Furey T.S."/>
            <person name="Baertsch R.A."/>
            <person name="Brent M.R."/>
            <person name="Keibler E."/>
            <person name="Flicek P."/>
            <person name="Bork P."/>
            <person name="Suyama M."/>
            <person name="Bailey J.A."/>
            <person name="Portnoy M.E."/>
            <person name="Torrents D."/>
            <person name="Chinwalla A.T."/>
            <person name="Gish W.R."/>
            <person name="Eddy S.R."/>
            <person name="McPherson J.D."/>
            <person name="Olson M.V."/>
            <person name="Eichler E.E."/>
            <person name="Green E.D."/>
            <person name="Waterston R.H."/>
            <person name="Wilson R.K."/>
        </authorList>
    </citation>
    <scope>NUCLEOTIDE SEQUENCE [LARGE SCALE GENOMIC DNA]</scope>
</reference>
<reference key="8">
    <citation type="journal article" date="2004" name="Genome Res.">
        <title>The status, quality, and expansion of the NIH full-length cDNA project: the Mammalian Gene Collection (MGC).</title>
        <authorList>
            <consortium name="The MGC Project Team"/>
        </authorList>
    </citation>
    <scope>NUCLEOTIDE SEQUENCE [LARGE SCALE MRNA] (ISOFORM 1)</scope>
    <source>
        <tissue>Testis</tissue>
    </source>
</reference>
<protein>
    <recommendedName>
        <fullName>F-box only protein 24</fullName>
    </recommendedName>
</protein>
<feature type="chain" id="PRO_0000119909" description="F-box only protein 24">
    <location>
        <begin position="1"/>
        <end position="580"/>
    </location>
</feature>
<feature type="domain" description="F-box" evidence="2">
    <location>
        <begin position="36"/>
        <end position="82"/>
    </location>
</feature>
<feature type="repeat" description="RCC1">
    <location>
        <begin position="376"/>
        <end position="425"/>
    </location>
</feature>
<feature type="splice variant" id="VSP_043458" description="In isoform 4." evidence="4">
    <original>MGEKAVPLLRRRR</original>
    <variation>M</variation>
    <location>
        <begin position="1"/>
        <end position="13"/>
    </location>
</feature>
<feature type="splice variant" id="VSP_043459" description="In isoform 3." evidence="4">
    <original>MGEKAVPLLRRR</original>
    <variation>MVWESQQERGGQGPRRQEGRSREGAIRMVRGSQRRKLQKFTRLCGREEGL</variation>
    <location>
        <begin position="1"/>
        <end position="12"/>
    </location>
</feature>
<feature type="splice variant" id="VSP_011351" description="In isoform 2." evidence="3">
    <original>GSGVRPWKRAAILNY</original>
    <variation>D</variation>
    <location>
        <begin position="94"/>
        <end position="108"/>
    </location>
</feature>
<feature type="splice variant" id="VSP_011352" description="In isoform 2." evidence="3">
    <original>QGGVYFEVHTPGVY</original>
    <variation>PILCSWLQPPWPGG</variation>
    <location>
        <begin position="319"/>
        <end position="332"/>
    </location>
</feature>
<feature type="splice variant" id="VSP_011353" description="In isoform 2." evidence="3">
    <location>
        <begin position="333"/>
        <end position="580"/>
    </location>
</feature>
<feature type="sequence variant" id="VAR_049042" description="In dbSNP:rs7801492.">
    <original>R</original>
    <variation>H</variation>
    <location>
        <position position="302"/>
    </location>
</feature>
<organism>
    <name type="scientific">Homo sapiens</name>
    <name type="common">Human</name>
    <dbReference type="NCBI Taxonomy" id="9606"/>
    <lineage>
        <taxon>Eukaryota</taxon>
        <taxon>Metazoa</taxon>
        <taxon>Chordata</taxon>
        <taxon>Craniata</taxon>
        <taxon>Vertebrata</taxon>
        <taxon>Euteleostomi</taxon>
        <taxon>Mammalia</taxon>
        <taxon>Eutheria</taxon>
        <taxon>Euarchontoglires</taxon>
        <taxon>Primates</taxon>
        <taxon>Haplorrhini</taxon>
        <taxon>Catarrhini</taxon>
        <taxon>Hominidae</taxon>
        <taxon>Homo</taxon>
    </lineage>
</organism>